<reference key="1">
    <citation type="journal article" date="2009" name="Genome Biol.">
        <title>Genomic and genetic analyses of diversity and plant interactions of Pseudomonas fluorescens.</title>
        <authorList>
            <person name="Silby M.W."/>
            <person name="Cerdeno-Tarraga A.M."/>
            <person name="Vernikos G.S."/>
            <person name="Giddens S.R."/>
            <person name="Jackson R.W."/>
            <person name="Preston G.M."/>
            <person name="Zhang X.-X."/>
            <person name="Moon C.D."/>
            <person name="Gehrig S.M."/>
            <person name="Godfrey S.A.C."/>
            <person name="Knight C.G."/>
            <person name="Malone J.G."/>
            <person name="Robinson Z."/>
            <person name="Spiers A.J."/>
            <person name="Harris S."/>
            <person name="Challis G.L."/>
            <person name="Yaxley A.M."/>
            <person name="Harris D."/>
            <person name="Seeger K."/>
            <person name="Murphy L."/>
            <person name="Rutter S."/>
            <person name="Squares R."/>
            <person name="Quail M.A."/>
            <person name="Saunders E."/>
            <person name="Mavromatis K."/>
            <person name="Brettin T.S."/>
            <person name="Bentley S.D."/>
            <person name="Hothersall J."/>
            <person name="Stephens E."/>
            <person name="Thomas C.M."/>
            <person name="Parkhill J."/>
            <person name="Levy S.B."/>
            <person name="Rainey P.B."/>
            <person name="Thomson N.R."/>
        </authorList>
    </citation>
    <scope>NUCLEOTIDE SEQUENCE [LARGE SCALE GENOMIC DNA]</scope>
    <source>
        <strain>Pf0-1</strain>
    </source>
</reference>
<gene>
    <name evidence="1" type="primary">ppnP</name>
    <name type="ordered locus">Pfl01_3952</name>
</gene>
<feature type="chain" id="PRO_0000298712" description="Pyrimidine/purine nucleoside phosphorylase">
    <location>
        <begin position="1"/>
        <end position="94"/>
    </location>
</feature>
<proteinExistence type="inferred from homology"/>
<dbReference type="EC" id="2.4.2.1" evidence="1"/>
<dbReference type="EC" id="2.4.2.2" evidence="1"/>
<dbReference type="EMBL" id="CP000094">
    <property type="protein sequence ID" value="ABA75689.1"/>
    <property type="molecule type" value="Genomic_DNA"/>
</dbReference>
<dbReference type="RefSeq" id="WP_011335266.1">
    <property type="nucleotide sequence ID" value="NC_007492.2"/>
</dbReference>
<dbReference type="SMR" id="Q3K965"/>
<dbReference type="KEGG" id="pfo:Pfl01_3952"/>
<dbReference type="eggNOG" id="COG3123">
    <property type="taxonomic scope" value="Bacteria"/>
</dbReference>
<dbReference type="HOGENOM" id="CLU_157874_0_0_6"/>
<dbReference type="Proteomes" id="UP000002704">
    <property type="component" value="Chromosome"/>
</dbReference>
<dbReference type="GO" id="GO:0005829">
    <property type="term" value="C:cytosol"/>
    <property type="evidence" value="ECO:0007669"/>
    <property type="project" value="TreeGrafter"/>
</dbReference>
<dbReference type="GO" id="GO:0047975">
    <property type="term" value="F:guanosine phosphorylase activity"/>
    <property type="evidence" value="ECO:0007669"/>
    <property type="project" value="UniProtKB-EC"/>
</dbReference>
<dbReference type="GO" id="GO:0004731">
    <property type="term" value="F:purine-nucleoside phosphorylase activity"/>
    <property type="evidence" value="ECO:0007669"/>
    <property type="project" value="UniProtKB-UniRule"/>
</dbReference>
<dbReference type="GO" id="GO:0009032">
    <property type="term" value="F:thymidine phosphorylase activity"/>
    <property type="evidence" value="ECO:0007669"/>
    <property type="project" value="UniProtKB-EC"/>
</dbReference>
<dbReference type="GO" id="GO:0004850">
    <property type="term" value="F:uridine phosphorylase activity"/>
    <property type="evidence" value="ECO:0007669"/>
    <property type="project" value="UniProtKB-EC"/>
</dbReference>
<dbReference type="CDD" id="cd20296">
    <property type="entry name" value="cupin_PpnP-like"/>
    <property type="match status" value="1"/>
</dbReference>
<dbReference type="FunFam" id="2.60.120.10:FF:000016">
    <property type="entry name" value="Pyrimidine/purine nucleoside phosphorylase"/>
    <property type="match status" value="1"/>
</dbReference>
<dbReference type="Gene3D" id="2.60.120.10">
    <property type="entry name" value="Jelly Rolls"/>
    <property type="match status" value="1"/>
</dbReference>
<dbReference type="HAMAP" id="MF_01537">
    <property type="entry name" value="Nucleos_phosphorylase_PpnP"/>
    <property type="match status" value="1"/>
</dbReference>
<dbReference type="InterPro" id="IPR009664">
    <property type="entry name" value="Ppnp"/>
</dbReference>
<dbReference type="InterPro" id="IPR014710">
    <property type="entry name" value="RmlC-like_jellyroll"/>
</dbReference>
<dbReference type="InterPro" id="IPR011051">
    <property type="entry name" value="RmlC_Cupin_sf"/>
</dbReference>
<dbReference type="PANTHER" id="PTHR36540">
    <property type="entry name" value="PYRIMIDINE/PURINE NUCLEOSIDE PHOSPHORYLASE"/>
    <property type="match status" value="1"/>
</dbReference>
<dbReference type="PANTHER" id="PTHR36540:SF1">
    <property type="entry name" value="PYRIMIDINE_PURINE NUCLEOSIDE PHOSPHORYLASE"/>
    <property type="match status" value="1"/>
</dbReference>
<dbReference type="Pfam" id="PF06865">
    <property type="entry name" value="Ppnp"/>
    <property type="match status" value="1"/>
</dbReference>
<dbReference type="SUPFAM" id="SSF51182">
    <property type="entry name" value="RmlC-like cupins"/>
    <property type="match status" value="1"/>
</dbReference>
<protein>
    <recommendedName>
        <fullName evidence="1">Pyrimidine/purine nucleoside phosphorylase</fullName>
        <ecNumber evidence="1">2.4.2.1</ecNumber>
        <ecNumber evidence="1">2.4.2.2</ecNumber>
    </recommendedName>
    <alternativeName>
        <fullName evidence="1">Adenosine phosphorylase</fullName>
    </alternativeName>
    <alternativeName>
        <fullName evidence="1">Cytidine phosphorylase</fullName>
    </alternativeName>
    <alternativeName>
        <fullName evidence="1">Guanosine phosphorylase</fullName>
    </alternativeName>
    <alternativeName>
        <fullName evidence="1">Inosine phosphorylase</fullName>
    </alternativeName>
    <alternativeName>
        <fullName evidence="1">Thymidine phosphorylase</fullName>
    </alternativeName>
    <alternativeName>
        <fullName evidence="1">Uridine phosphorylase</fullName>
    </alternativeName>
    <alternativeName>
        <fullName evidence="1">Xanthosine phosphorylase</fullName>
    </alternativeName>
</protein>
<sequence>MFKVNEYFDGTVKSIAFGTAEGPATIGVMAAGEYEFGTSQREIMHVVSGALTVKLPDSSDWETFAAGSQFNVPANSKFQLKVAVDTAYLCEYRG</sequence>
<accession>Q3K965</accession>
<organism>
    <name type="scientific">Pseudomonas fluorescens (strain Pf0-1)</name>
    <dbReference type="NCBI Taxonomy" id="205922"/>
    <lineage>
        <taxon>Bacteria</taxon>
        <taxon>Pseudomonadati</taxon>
        <taxon>Pseudomonadota</taxon>
        <taxon>Gammaproteobacteria</taxon>
        <taxon>Pseudomonadales</taxon>
        <taxon>Pseudomonadaceae</taxon>
        <taxon>Pseudomonas</taxon>
    </lineage>
</organism>
<keyword id="KW-0328">Glycosyltransferase</keyword>
<keyword id="KW-0808">Transferase</keyword>
<name>PPNP_PSEPF</name>
<comment type="function">
    <text evidence="1">Catalyzes the phosphorolysis of diverse nucleosides, yielding D-ribose 1-phosphate and the respective free bases. Can use uridine, adenosine, guanosine, cytidine, thymidine, inosine and xanthosine as substrates. Also catalyzes the reverse reactions.</text>
</comment>
<comment type="catalytic activity">
    <reaction evidence="1">
        <text>a purine D-ribonucleoside + phosphate = a purine nucleobase + alpha-D-ribose 1-phosphate</text>
        <dbReference type="Rhea" id="RHEA:19805"/>
        <dbReference type="ChEBI" id="CHEBI:26386"/>
        <dbReference type="ChEBI" id="CHEBI:43474"/>
        <dbReference type="ChEBI" id="CHEBI:57720"/>
        <dbReference type="ChEBI" id="CHEBI:142355"/>
        <dbReference type="EC" id="2.4.2.1"/>
    </reaction>
</comment>
<comment type="catalytic activity">
    <reaction evidence="1">
        <text>adenosine + phosphate = alpha-D-ribose 1-phosphate + adenine</text>
        <dbReference type="Rhea" id="RHEA:27642"/>
        <dbReference type="ChEBI" id="CHEBI:16335"/>
        <dbReference type="ChEBI" id="CHEBI:16708"/>
        <dbReference type="ChEBI" id="CHEBI:43474"/>
        <dbReference type="ChEBI" id="CHEBI:57720"/>
        <dbReference type="EC" id="2.4.2.1"/>
    </reaction>
</comment>
<comment type="catalytic activity">
    <reaction evidence="1">
        <text>cytidine + phosphate = cytosine + alpha-D-ribose 1-phosphate</text>
        <dbReference type="Rhea" id="RHEA:52540"/>
        <dbReference type="ChEBI" id="CHEBI:16040"/>
        <dbReference type="ChEBI" id="CHEBI:17562"/>
        <dbReference type="ChEBI" id="CHEBI:43474"/>
        <dbReference type="ChEBI" id="CHEBI:57720"/>
        <dbReference type="EC" id="2.4.2.2"/>
    </reaction>
</comment>
<comment type="catalytic activity">
    <reaction evidence="1">
        <text>guanosine + phosphate = alpha-D-ribose 1-phosphate + guanine</text>
        <dbReference type="Rhea" id="RHEA:13233"/>
        <dbReference type="ChEBI" id="CHEBI:16235"/>
        <dbReference type="ChEBI" id="CHEBI:16750"/>
        <dbReference type="ChEBI" id="CHEBI:43474"/>
        <dbReference type="ChEBI" id="CHEBI:57720"/>
        <dbReference type="EC" id="2.4.2.1"/>
    </reaction>
</comment>
<comment type="catalytic activity">
    <reaction evidence="1">
        <text>inosine + phosphate = alpha-D-ribose 1-phosphate + hypoxanthine</text>
        <dbReference type="Rhea" id="RHEA:27646"/>
        <dbReference type="ChEBI" id="CHEBI:17368"/>
        <dbReference type="ChEBI" id="CHEBI:17596"/>
        <dbReference type="ChEBI" id="CHEBI:43474"/>
        <dbReference type="ChEBI" id="CHEBI:57720"/>
        <dbReference type="EC" id="2.4.2.1"/>
    </reaction>
</comment>
<comment type="catalytic activity">
    <reaction evidence="1">
        <text>thymidine + phosphate = 2-deoxy-alpha-D-ribose 1-phosphate + thymine</text>
        <dbReference type="Rhea" id="RHEA:16037"/>
        <dbReference type="ChEBI" id="CHEBI:17748"/>
        <dbReference type="ChEBI" id="CHEBI:17821"/>
        <dbReference type="ChEBI" id="CHEBI:43474"/>
        <dbReference type="ChEBI" id="CHEBI:57259"/>
        <dbReference type="EC" id="2.4.2.2"/>
    </reaction>
</comment>
<comment type="catalytic activity">
    <reaction evidence="1">
        <text>uridine + phosphate = alpha-D-ribose 1-phosphate + uracil</text>
        <dbReference type="Rhea" id="RHEA:24388"/>
        <dbReference type="ChEBI" id="CHEBI:16704"/>
        <dbReference type="ChEBI" id="CHEBI:17568"/>
        <dbReference type="ChEBI" id="CHEBI:43474"/>
        <dbReference type="ChEBI" id="CHEBI:57720"/>
        <dbReference type="EC" id="2.4.2.2"/>
    </reaction>
</comment>
<comment type="catalytic activity">
    <reaction evidence="1">
        <text>xanthosine + phosphate = alpha-D-ribose 1-phosphate + xanthine</text>
        <dbReference type="Rhea" id="RHEA:27638"/>
        <dbReference type="ChEBI" id="CHEBI:17712"/>
        <dbReference type="ChEBI" id="CHEBI:18107"/>
        <dbReference type="ChEBI" id="CHEBI:43474"/>
        <dbReference type="ChEBI" id="CHEBI:57720"/>
        <dbReference type="EC" id="2.4.2.1"/>
    </reaction>
</comment>
<comment type="similarity">
    <text evidence="1">Belongs to the nucleoside phosphorylase PpnP family.</text>
</comment>
<evidence type="ECO:0000255" key="1">
    <source>
        <dbReference type="HAMAP-Rule" id="MF_01537"/>
    </source>
</evidence>